<keyword id="KW-0027">Amidation</keyword>
<keyword id="KW-0044">Antibiotic</keyword>
<keyword id="KW-0929">Antimicrobial</keyword>
<keyword id="KW-0204">Cytolysis</keyword>
<keyword id="KW-0295">Fungicide</keyword>
<keyword id="KW-0354">Hemolysis</keyword>
<keyword id="KW-0964">Secreted</keyword>
<keyword id="KW-0732">Signal</keyword>
<accession>S6CWV8</accession>
<sequence length="73" mass="8410">MQIKHLITLFFLVLIVADQCSAFLSLIPSLVGGSISAFKGRRKREISAQIEQYKDLQKREAELEELLDRLPMY</sequence>
<dbReference type="EMBL" id="HF677516">
    <property type="protein sequence ID" value="CCQ98791.1"/>
    <property type="molecule type" value="mRNA"/>
</dbReference>
<dbReference type="SMR" id="S6CWV8"/>
<dbReference type="GO" id="GO:0005576">
    <property type="term" value="C:extracellular region"/>
    <property type="evidence" value="ECO:0007669"/>
    <property type="project" value="UniProtKB-SubCell"/>
</dbReference>
<dbReference type="GO" id="GO:0042742">
    <property type="term" value="P:defense response to bacterium"/>
    <property type="evidence" value="ECO:0007669"/>
    <property type="project" value="UniProtKB-KW"/>
</dbReference>
<dbReference type="GO" id="GO:0050832">
    <property type="term" value="P:defense response to fungus"/>
    <property type="evidence" value="ECO:0007669"/>
    <property type="project" value="UniProtKB-KW"/>
</dbReference>
<dbReference type="GO" id="GO:0031640">
    <property type="term" value="P:killing of cells of another organism"/>
    <property type="evidence" value="ECO:0007669"/>
    <property type="project" value="UniProtKB-KW"/>
</dbReference>
<name>NDB4M_TITSE</name>
<proteinExistence type="evidence at protein level"/>
<protein>
    <recommendedName>
        <fullName evidence="2">Antimicrobial peptide TsAP-1</fullName>
    </recommendedName>
    <alternativeName>
        <fullName evidence="3">Non-disulfide-bridged peptide 4.22</fullName>
        <shortName evidence="3">NDBP-4.22</shortName>
    </alternativeName>
</protein>
<reference key="1">
    <citation type="journal article" date="2013" name="Biochimie">
        <title>Two peptides, TsAP-1 and TsAP-2, from the venom of the Brazilian yellow scorpion, Tityus serrulatus: evaluation of their antimicrobial and anticancer activities.</title>
        <authorList>
            <person name="Guo X."/>
            <person name="Ma C."/>
            <person name="Du Q."/>
            <person name="Wei R."/>
            <person name="Wang L."/>
            <person name="Zhou M."/>
            <person name="Chen T."/>
            <person name="Shaw C."/>
        </authorList>
    </citation>
    <scope>NUCLEOTIDE SEQUENCE [MRNA]</scope>
    <scope>FUNCTION</scope>
    <scope>SYNTHESIS OF 23-39</scope>
    <scope>MUTAGENESIS OF SER-29; 32-GLY--SER-34 AND SER-36</scope>
    <scope>MASS SPECTROMETRY</scope>
    <scope>AMIDATION AT LYS-39</scope>
    <scope>SUBCELLULAR LOCATION</scope>
    <source>
        <tissue>Venom</tissue>
        <tissue>Venom gland</tissue>
    </source>
</reference>
<reference key="2">
    <citation type="journal article" date="2014" name="Peptides">
        <title>Scorpion venom peptides with no disulfide bridges: a review.</title>
        <authorList>
            <person name="Almaaytah A."/>
            <person name="Albalas Q."/>
        </authorList>
    </citation>
    <scope>NOMENCLATURE</scope>
</reference>
<evidence type="ECO:0000269" key="1">
    <source>
    </source>
</evidence>
<evidence type="ECO:0000303" key="2">
    <source>
    </source>
</evidence>
<evidence type="ECO:0000303" key="3">
    <source>
    </source>
</evidence>
<evidence type="ECO:0000305" key="4"/>
<evidence type="ECO:0000305" key="5">
    <source>
    </source>
</evidence>
<comment type="function">
    <text evidence="1">Has a low antimicrobial activity against S.aureus, E.coli, and C.albicans (MICs 120-160 uM). Has a low hemolytic activity (4% at 160 uM). Also inhibits the growth of two cancer cell lines on a total of five (the squamous carcinoma cell line H157 (IC(50)=55.9 uM) and the lung adenocarcinoma cell line H838 (IC(50)=52.5 uM)).</text>
</comment>
<comment type="subcellular location">
    <subcellularLocation>
        <location evidence="1">Secreted</location>
    </subcellularLocation>
</comment>
<comment type="tissue specificity">
    <text evidence="5">Expressed by the venom gland.</text>
</comment>
<comment type="mass spectrometry" mass="1735.2" method="Electrospray" evidence="1"/>
<comment type="similarity">
    <text evidence="4">Belongs to the non-disulfide-bridged peptide (NDBP) superfamily. Short antimicrobial peptide (group 4) family.</text>
</comment>
<organism>
    <name type="scientific">Tityus serrulatus</name>
    <name type="common">Brazilian scorpion</name>
    <dbReference type="NCBI Taxonomy" id="6887"/>
    <lineage>
        <taxon>Eukaryota</taxon>
        <taxon>Metazoa</taxon>
        <taxon>Ecdysozoa</taxon>
        <taxon>Arthropoda</taxon>
        <taxon>Chelicerata</taxon>
        <taxon>Arachnida</taxon>
        <taxon>Scorpiones</taxon>
        <taxon>Buthida</taxon>
        <taxon>Buthoidea</taxon>
        <taxon>Buthidae</taxon>
        <taxon>Tityus</taxon>
    </lineage>
</organism>
<feature type="signal peptide" evidence="5">
    <location>
        <begin position="1"/>
        <end position="22"/>
    </location>
</feature>
<feature type="peptide" id="PRO_5001155561" description="Antimicrobial peptide TsAP-1" evidence="1">
    <location>
        <begin position="23"/>
        <end position="39"/>
    </location>
</feature>
<feature type="propeptide" id="PRO_5001155560" evidence="5">
    <location>
        <begin position="45"/>
        <end position="73"/>
    </location>
</feature>
<feature type="modified residue" description="Lysine amide" evidence="1">
    <location>
        <position position="39"/>
    </location>
</feature>
<feature type="mutagenesis site" description="Important increase of antimicrobial and hemolytic activities; when associated with 32-K--I-34, AND K-36." evidence="1">
    <original>S</original>
    <variation>K</variation>
    <location>
        <position position="29"/>
    </location>
</feature>
<feature type="mutagenesis site" description="Important increase of antimicrobial and hemolytic activities; when associated with K-29 and K-36." evidence="1">
    <original>GGS</original>
    <variation>KKI</variation>
    <location>
        <begin position="32"/>
        <end position="34"/>
    </location>
</feature>
<feature type="mutagenesis site" description="Important increase of antimicrobial and hemolytic activities; when associated with K-29 and 32-K--I-34." evidence="1">
    <original>S</original>
    <variation>K</variation>
    <location>
        <position position="36"/>
    </location>
</feature>